<reference key="1">
    <citation type="journal article" date="1999" name="Bioorg. Khim.">
        <title>Molecular cloning of some components of the translation apparatus of fission yeast Schizosaccharomyces pombe and a list of its cytoplasmic proteins genes.</title>
        <authorList>
            <person name="Shpakovskii G.V."/>
            <person name="Baranova G.M."/>
            <person name="Wood V."/>
            <person name="Gwilliam R.G."/>
            <person name="Shematorova E.K."/>
            <person name="Korol'chuk O.L."/>
            <person name="Lebedenko E.N."/>
        </authorList>
    </citation>
    <scope>NUCLEOTIDE SEQUENCE [MRNA]</scope>
    <source>
        <strain>972 / ATCC 24843</strain>
    </source>
</reference>
<reference key="2">
    <citation type="journal article" date="2002" name="Nature">
        <title>The genome sequence of Schizosaccharomyces pombe.</title>
        <authorList>
            <person name="Wood V."/>
            <person name="Gwilliam R."/>
            <person name="Rajandream M.A."/>
            <person name="Lyne M.H."/>
            <person name="Lyne R."/>
            <person name="Stewart A."/>
            <person name="Sgouros J.G."/>
            <person name="Peat N."/>
            <person name="Hayles J."/>
            <person name="Baker S.G."/>
            <person name="Basham D."/>
            <person name="Bowman S."/>
            <person name="Brooks K."/>
            <person name="Brown D."/>
            <person name="Brown S."/>
            <person name="Chillingworth T."/>
            <person name="Churcher C.M."/>
            <person name="Collins M."/>
            <person name="Connor R."/>
            <person name="Cronin A."/>
            <person name="Davis P."/>
            <person name="Feltwell T."/>
            <person name="Fraser A."/>
            <person name="Gentles S."/>
            <person name="Goble A."/>
            <person name="Hamlin N."/>
            <person name="Harris D.E."/>
            <person name="Hidalgo J."/>
            <person name="Hodgson G."/>
            <person name="Holroyd S."/>
            <person name="Hornsby T."/>
            <person name="Howarth S."/>
            <person name="Huckle E.J."/>
            <person name="Hunt S."/>
            <person name="Jagels K."/>
            <person name="James K.D."/>
            <person name="Jones L."/>
            <person name="Jones M."/>
            <person name="Leather S."/>
            <person name="McDonald S."/>
            <person name="McLean J."/>
            <person name="Mooney P."/>
            <person name="Moule S."/>
            <person name="Mungall K.L."/>
            <person name="Murphy L.D."/>
            <person name="Niblett D."/>
            <person name="Odell C."/>
            <person name="Oliver K."/>
            <person name="O'Neil S."/>
            <person name="Pearson D."/>
            <person name="Quail M.A."/>
            <person name="Rabbinowitsch E."/>
            <person name="Rutherford K.M."/>
            <person name="Rutter S."/>
            <person name="Saunders D."/>
            <person name="Seeger K."/>
            <person name="Sharp S."/>
            <person name="Skelton J."/>
            <person name="Simmonds M.N."/>
            <person name="Squares R."/>
            <person name="Squares S."/>
            <person name="Stevens K."/>
            <person name="Taylor K."/>
            <person name="Taylor R.G."/>
            <person name="Tivey A."/>
            <person name="Walsh S.V."/>
            <person name="Warren T."/>
            <person name="Whitehead S."/>
            <person name="Woodward J.R."/>
            <person name="Volckaert G."/>
            <person name="Aert R."/>
            <person name="Robben J."/>
            <person name="Grymonprez B."/>
            <person name="Weltjens I."/>
            <person name="Vanstreels E."/>
            <person name="Rieger M."/>
            <person name="Schaefer M."/>
            <person name="Mueller-Auer S."/>
            <person name="Gabel C."/>
            <person name="Fuchs M."/>
            <person name="Duesterhoeft A."/>
            <person name="Fritzc C."/>
            <person name="Holzer E."/>
            <person name="Moestl D."/>
            <person name="Hilbert H."/>
            <person name="Borzym K."/>
            <person name="Langer I."/>
            <person name="Beck A."/>
            <person name="Lehrach H."/>
            <person name="Reinhardt R."/>
            <person name="Pohl T.M."/>
            <person name="Eger P."/>
            <person name="Zimmermann W."/>
            <person name="Wedler H."/>
            <person name="Wambutt R."/>
            <person name="Purnelle B."/>
            <person name="Goffeau A."/>
            <person name="Cadieu E."/>
            <person name="Dreano S."/>
            <person name="Gloux S."/>
            <person name="Lelaure V."/>
            <person name="Mottier S."/>
            <person name="Galibert F."/>
            <person name="Aves S.J."/>
            <person name="Xiang Z."/>
            <person name="Hunt C."/>
            <person name="Moore K."/>
            <person name="Hurst S.M."/>
            <person name="Lucas M."/>
            <person name="Rochet M."/>
            <person name="Gaillardin C."/>
            <person name="Tallada V.A."/>
            <person name="Garzon A."/>
            <person name="Thode G."/>
            <person name="Daga R.R."/>
            <person name="Cruzado L."/>
            <person name="Jimenez J."/>
            <person name="Sanchez M."/>
            <person name="del Rey F."/>
            <person name="Benito J."/>
            <person name="Dominguez A."/>
            <person name="Revuelta J.L."/>
            <person name="Moreno S."/>
            <person name="Armstrong J."/>
            <person name="Forsburg S.L."/>
            <person name="Cerutti L."/>
            <person name="Lowe T."/>
            <person name="McCombie W.R."/>
            <person name="Paulsen I."/>
            <person name="Potashkin J."/>
            <person name="Shpakovski G.V."/>
            <person name="Ussery D."/>
            <person name="Barrell B.G."/>
            <person name="Nurse P."/>
        </authorList>
    </citation>
    <scope>NUCLEOTIDE SEQUENCE [LARGE SCALE GENOMIC DNA]</scope>
    <source>
        <strain>972 / ATCC 24843</strain>
    </source>
</reference>
<reference key="3">
    <citation type="submission" date="1997-11" db="EMBL/GenBank/DDBJ databases">
        <title>S.pombe ribosomal protein L18 homolog.</title>
        <authorList>
            <person name="Kawamukai M."/>
        </authorList>
    </citation>
    <scope>NUCLEOTIDE SEQUENCE [MRNA] OF 11-176</scope>
</reference>
<reference key="4">
    <citation type="journal article" date="1983" name="Mol. Gen. Genet.">
        <title>Yeast ribosomal proteins: VII. Cytoplasmic ribosomal proteins from Schizosaccharomyces pombe.</title>
        <authorList>
            <person name="Otaka E."/>
            <person name="Higo K."/>
            <person name="Itoh T."/>
        </authorList>
    </citation>
    <scope>PROTEIN SEQUENCE OF 2-46</scope>
</reference>
<reference key="5">
    <citation type="journal article" date="2006" name="Nat. Biotechnol.">
        <title>ORFeome cloning and global analysis of protein localization in the fission yeast Schizosaccharomyces pombe.</title>
        <authorList>
            <person name="Matsuyama A."/>
            <person name="Arai R."/>
            <person name="Yashiroda Y."/>
            <person name="Shirai A."/>
            <person name="Kamata A."/>
            <person name="Sekido S."/>
            <person name="Kobayashi Y."/>
            <person name="Hashimoto A."/>
            <person name="Hamamoto M."/>
            <person name="Hiraoka Y."/>
            <person name="Horinouchi S."/>
            <person name="Yoshida M."/>
        </authorList>
    </citation>
    <scope>SUBCELLULAR LOCATION [LARGE SCALE ANALYSIS]</scope>
</reference>
<protein>
    <recommendedName>
        <fullName evidence="5">Large ribosomal subunit protein eL20B</fullName>
    </recommendedName>
    <alternativeName>
        <fullName>60S ribosomal protein L20-B</fullName>
    </alternativeName>
    <alternativeName>
        <fullName evidence="4">SP-L17</fullName>
    </alternativeName>
</protein>
<dbReference type="EMBL" id="AF127913">
    <property type="protein sequence ID" value="AAD33345.1"/>
    <property type="molecule type" value="mRNA"/>
</dbReference>
<dbReference type="EMBL" id="CU329670">
    <property type="protein sequence ID" value="CAA93227.1"/>
    <property type="molecule type" value="Genomic_DNA"/>
</dbReference>
<dbReference type="EMBL" id="AB009012">
    <property type="protein sequence ID" value="BAA23633.1"/>
    <property type="molecule type" value="mRNA"/>
</dbReference>
<dbReference type="PIR" id="S10051">
    <property type="entry name" value="S10051"/>
</dbReference>
<dbReference type="PIR" id="T38392">
    <property type="entry name" value="T38392"/>
</dbReference>
<dbReference type="PIR" id="T43301">
    <property type="entry name" value="T43301"/>
</dbReference>
<dbReference type="RefSeq" id="NP_594147.1">
    <property type="nucleotide sequence ID" value="NM_001019571.2"/>
</dbReference>
<dbReference type="SMR" id="P0CT69"/>
<dbReference type="FunCoup" id="P0CT69">
    <property type="interactions" value="464"/>
</dbReference>
<dbReference type="STRING" id="284812.P0CT69"/>
<dbReference type="iPTMnet" id="P0CT69"/>
<dbReference type="EnsemblFungi" id="SPAC26A3.04.1">
    <property type="protein sequence ID" value="SPAC26A3.04.1:pep"/>
    <property type="gene ID" value="SPAC26A3.04"/>
</dbReference>
<dbReference type="EnsemblFungi" id="SPAC3A12.10.1">
    <property type="protein sequence ID" value="SPAC3A12.10.1:pep"/>
    <property type="gene ID" value="SPAC3A12.10"/>
</dbReference>
<dbReference type="GeneID" id="2542093"/>
<dbReference type="KEGG" id="spo:2542093"/>
<dbReference type="KEGG" id="spo:2542725"/>
<dbReference type="PomBase" id="SPAC26A3.04">
    <property type="gene designation" value="rpl2002"/>
</dbReference>
<dbReference type="VEuPathDB" id="FungiDB:SPAC26A3.04"/>
<dbReference type="VEuPathDB" id="FungiDB:SPAC3A12.10"/>
<dbReference type="InParanoid" id="P0CT69"/>
<dbReference type="OMA" id="CIFAKND"/>
<dbReference type="PhylomeDB" id="P0CT69"/>
<dbReference type="Reactome" id="R-SPO-156827">
    <property type="pathway name" value="L13a-mediated translational silencing of Ceruloplasmin expression"/>
</dbReference>
<dbReference type="Reactome" id="R-SPO-1799339">
    <property type="pathway name" value="SRP-dependent cotranslational protein targeting to membrane"/>
</dbReference>
<dbReference type="Reactome" id="R-SPO-72689">
    <property type="pathway name" value="Formation of a pool of free 40S subunits"/>
</dbReference>
<dbReference type="Reactome" id="R-SPO-72706">
    <property type="pathway name" value="GTP hydrolysis and joining of the 60S ribosomal subunit"/>
</dbReference>
<dbReference type="Reactome" id="R-SPO-975956">
    <property type="pathway name" value="Nonsense Mediated Decay (NMD) independent of the Exon Junction Complex (EJC)"/>
</dbReference>
<dbReference type="Reactome" id="R-SPO-975957">
    <property type="pathway name" value="Nonsense Mediated Decay (NMD) enhanced by the Exon Junction Complex (EJC)"/>
</dbReference>
<dbReference type="PRO" id="PR:P0CT69"/>
<dbReference type="Proteomes" id="UP000002485">
    <property type="component" value="Chromosome I"/>
</dbReference>
<dbReference type="GO" id="GO:0005829">
    <property type="term" value="C:cytosol"/>
    <property type="evidence" value="ECO:0007005"/>
    <property type="project" value="PomBase"/>
</dbReference>
<dbReference type="GO" id="GO:0022625">
    <property type="term" value="C:cytosolic large ribosomal subunit"/>
    <property type="evidence" value="ECO:0000318"/>
    <property type="project" value="GO_Central"/>
</dbReference>
<dbReference type="GO" id="GO:0005730">
    <property type="term" value="C:nucleolus"/>
    <property type="evidence" value="ECO:0007005"/>
    <property type="project" value="PomBase"/>
</dbReference>
<dbReference type="GO" id="GO:0030684">
    <property type="term" value="C:preribosome"/>
    <property type="evidence" value="ECO:0000314"/>
    <property type="project" value="PomBase"/>
</dbReference>
<dbReference type="GO" id="GO:0003735">
    <property type="term" value="F:structural constituent of ribosome"/>
    <property type="evidence" value="ECO:0000318"/>
    <property type="project" value="GO_Central"/>
</dbReference>
<dbReference type="GO" id="GO:0002181">
    <property type="term" value="P:cytoplasmic translation"/>
    <property type="evidence" value="ECO:0000318"/>
    <property type="project" value="GO_Central"/>
</dbReference>
<dbReference type="FunFam" id="3.10.20.10:FF:000001">
    <property type="entry name" value="60S ribosomal protein L18a"/>
    <property type="match status" value="1"/>
</dbReference>
<dbReference type="FunFam" id="3.10.20.10:FF:000002">
    <property type="entry name" value="60S ribosomal protein L18a"/>
    <property type="match status" value="1"/>
</dbReference>
<dbReference type="Gene3D" id="3.10.20.10">
    <property type="match status" value="2"/>
</dbReference>
<dbReference type="HAMAP" id="MF_00273">
    <property type="entry name" value="Ribosomal_eL20"/>
    <property type="match status" value="1"/>
</dbReference>
<dbReference type="InterPro" id="IPR028877">
    <property type="entry name" value="Ribosomal_eL20"/>
</dbReference>
<dbReference type="InterPro" id="IPR023573">
    <property type="entry name" value="Ribosomal_eL20_dom"/>
</dbReference>
<dbReference type="InterPro" id="IPR021138">
    <property type="entry name" value="Ribosomal_eL20_eukaryotes"/>
</dbReference>
<dbReference type="PANTHER" id="PTHR10052">
    <property type="entry name" value="60S RIBOSOMAL PROTEIN L18A"/>
    <property type="match status" value="1"/>
</dbReference>
<dbReference type="Pfam" id="PF01775">
    <property type="entry name" value="Ribosomal_L18A"/>
    <property type="match status" value="1"/>
</dbReference>
<dbReference type="PIRSF" id="PIRSF002190">
    <property type="entry name" value="Ribosomal_L18a"/>
    <property type="match status" value="1"/>
</dbReference>
<dbReference type="SUPFAM" id="SSF160374">
    <property type="entry name" value="RplX-like"/>
    <property type="match status" value="1"/>
</dbReference>
<feature type="initiator methionine" description="Removed" evidence="3">
    <location>
        <position position="1"/>
    </location>
</feature>
<feature type="chain" id="PRO_0000433417" description="Large ribosomal subunit protein eL20B">
    <location>
        <begin position="2"/>
        <end position="176"/>
    </location>
</feature>
<feature type="sequence conflict" description="In Ref. 4; AA sequence." evidence="5" ref="4">
    <original>WY</original>
    <variation>GT</variation>
    <location>
        <begin position="41"/>
        <end position="42"/>
    </location>
</feature>
<proteinExistence type="evidence at protein level"/>
<evidence type="ECO:0000250" key="1">
    <source>
        <dbReference type="UniProtKB" id="P0CX24"/>
    </source>
</evidence>
<evidence type="ECO:0000269" key="2">
    <source>
    </source>
</evidence>
<evidence type="ECO:0000269" key="3">
    <source>
    </source>
</evidence>
<evidence type="ECO:0000303" key="4">
    <source>
    </source>
</evidence>
<evidence type="ECO:0000305" key="5"/>
<organism>
    <name type="scientific">Schizosaccharomyces pombe (strain 972 / ATCC 24843)</name>
    <name type="common">Fission yeast</name>
    <dbReference type="NCBI Taxonomy" id="284812"/>
    <lineage>
        <taxon>Eukaryota</taxon>
        <taxon>Fungi</taxon>
        <taxon>Dikarya</taxon>
        <taxon>Ascomycota</taxon>
        <taxon>Taphrinomycotina</taxon>
        <taxon>Schizosaccharomycetes</taxon>
        <taxon>Schizosaccharomycetales</taxon>
        <taxon>Schizosaccharomycetaceae</taxon>
        <taxon>Schizosaccharomyces</taxon>
    </lineage>
</organism>
<sequence length="176" mass="20599">MALKEYQVVGRKVPTEHEPVPKLFRMRLFAPNESVAKSRYWYFLKMINKVKKATGEIVAINEISEPKPLKAKVFGIWIRYDSRSGTHNMYKEFRDTTRVGAVEAMYADMAARHRARFRSIRILKVVEVEKKEDVRRNYVKQLLNPHLKFPLPHRRTGVVGLAGKKVFAPHRPSTFY</sequence>
<gene>
    <name type="primary">rpl2002</name>
    <name type="synonym">rpl20b</name>
    <name type="ORF">SPAC26A3.04</name>
</gene>
<name>RL20B_SCHPO</name>
<keyword id="KW-0963">Cytoplasm</keyword>
<keyword id="KW-0903">Direct protein sequencing</keyword>
<keyword id="KW-0539">Nucleus</keyword>
<keyword id="KW-1185">Reference proteome</keyword>
<keyword id="KW-0687">Ribonucleoprotein</keyword>
<keyword id="KW-0689">Ribosomal protein</keyword>
<accession>P0CT69</accession>
<accession>P05732</accession>
<comment type="function">
    <text evidence="1">Component of the ribosome, a large ribonucleoprotein complex responsible for the synthesis of proteins in the cell. The small ribosomal subunit (SSU) binds messenger RNAs (mRNAs) and translates the encoded message by selecting cognate aminoacyl-transfer RNA (tRNA) molecules. The large subunit (LSU) contains the ribosomal catalytic site termed the peptidyl transferase center (PTC), which catalyzes the formation of peptide bonds, thereby polymerizing the amino acids delivered by tRNAs into a polypeptide chain. The nascent polypeptides leave the ribosome through a tunnel in the LSU and interact with protein factors that function in enzymatic processing, targeting, and the membrane insertion of nascent chains at the exit of the ribosomal tunnel.</text>
</comment>
<comment type="subunit">
    <text evidence="1">Component of the large ribosomal subunit (LSU). Mature yeast ribosomes consist of a small (40S) and a large (60S) subunit. The 40S small subunit contains 1 molecule of ribosomal RNA (18S rRNA) and at least 33 different proteins. The large 60S subunit contains 3 rRNA molecules (25S, 5.8S and 5S rRNA) and at least 46 different proteins. eL20 forms multiple interactions with RNA and proteins in the central protuberance, connecting components of core functional centers that are located far apart.</text>
</comment>
<comment type="subcellular location">
    <subcellularLocation>
        <location evidence="2">Cytoplasm</location>
    </subcellularLocation>
    <subcellularLocation>
        <location evidence="2">Nucleus</location>
        <location evidence="2">Nucleolus</location>
    </subcellularLocation>
</comment>
<comment type="miscellaneous">
    <text>There are 2 genes for eL20 in S.pombe.</text>
</comment>
<comment type="similarity">
    <text evidence="5">Belongs to the eukaryotic ribosomal protein eL20 family.</text>
</comment>